<evidence type="ECO:0000255" key="1">
    <source>
        <dbReference type="HAMAP-Rule" id="MF_01888"/>
    </source>
</evidence>
<evidence type="ECO:0000256" key="2">
    <source>
        <dbReference type="SAM" id="MobiDB-lite"/>
    </source>
</evidence>
<proteinExistence type="inferred from homology"/>
<feature type="chain" id="PRO_0000404309" description="Regulator of ribonuclease activity B">
    <location>
        <begin position="1"/>
        <end position="140"/>
    </location>
</feature>
<feature type="region of interest" description="Disordered" evidence="2">
    <location>
        <begin position="115"/>
        <end position="140"/>
    </location>
</feature>
<feature type="compositionally biased region" description="Acidic residues" evidence="2">
    <location>
        <begin position="119"/>
        <end position="140"/>
    </location>
</feature>
<dbReference type="EMBL" id="CP001875">
    <property type="protein sequence ID" value="ADD75657.1"/>
    <property type="molecule type" value="Genomic_DNA"/>
</dbReference>
<dbReference type="RefSeq" id="WP_013024385.1">
    <property type="nucleotide sequence ID" value="NC_013956.2"/>
</dbReference>
<dbReference type="SMR" id="D4GIR2"/>
<dbReference type="STRING" id="706191.PANA_0490"/>
<dbReference type="GeneID" id="57269753"/>
<dbReference type="KEGG" id="pam:PANA_0490"/>
<dbReference type="eggNOG" id="COG3076">
    <property type="taxonomic scope" value="Bacteria"/>
</dbReference>
<dbReference type="HOGENOM" id="CLU_128640_0_0_6"/>
<dbReference type="Proteomes" id="UP000001702">
    <property type="component" value="Chromosome"/>
</dbReference>
<dbReference type="GO" id="GO:0005737">
    <property type="term" value="C:cytoplasm"/>
    <property type="evidence" value="ECO:0007669"/>
    <property type="project" value="UniProtKB-SubCell"/>
</dbReference>
<dbReference type="GO" id="GO:0060698">
    <property type="term" value="F:endoribonuclease inhibitor activity"/>
    <property type="evidence" value="ECO:0007669"/>
    <property type="project" value="UniProtKB-UniRule"/>
</dbReference>
<dbReference type="GO" id="GO:0019899">
    <property type="term" value="F:enzyme binding"/>
    <property type="evidence" value="ECO:0007669"/>
    <property type="project" value="UniProtKB-UniRule"/>
</dbReference>
<dbReference type="Gene3D" id="3.30.70.970">
    <property type="entry name" value="RraB-like"/>
    <property type="match status" value="1"/>
</dbReference>
<dbReference type="HAMAP" id="MF_01888">
    <property type="entry name" value="RraB"/>
    <property type="match status" value="1"/>
</dbReference>
<dbReference type="InterPro" id="IPR016716">
    <property type="entry name" value="RraB"/>
</dbReference>
<dbReference type="InterPro" id="IPR036701">
    <property type="entry name" value="RraB-like_sf"/>
</dbReference>
<dbReference type="InterPro" id="IPR009671">
    <property type="entry name" value="RraB_dom"/>
</dbReference>
<dbReference type="NCBIfam" id="NF008393">
    <property type="entry name" value="PRK11191.1"/>
    <property type="match status" value="1"/>
</dbReference>
<dbReference type="Pfam" id="PF06877">
    <property type="entry name" value="RraB"/>
    <property type="match status" value="1"/>
</dbReference>
<dbReference type="PIRSF" id="PIRSF018193">
    <property type="entry name" value="UCP018193"/>
    <property type="match status" value="1"/>
</dbReference>
<dbReference type="SUPFAM" id="SSF89946">
    <property type="entry name" value="Hypothetical protein VC0424"/>
    <property type="match status" value="1"/>
</dbReference>
<sequence>MAFEALLEEQREETRLIIEELLEDGSDPDALYTIEHHLSCNNFDSLEKAAVDAFKLGYEVTEPEELELEDGTTVMCVDILSEGALKAELIDAQVEQLVNLVAKYNVDYDGWGTYFEDPNAQDDDEDDGEAIDEDDNGIRH</sequence>
<reference key="1">
    <citation type="journal article" date="2010" name="J. Bacteriol.">
        <title>Genome sequence of Pantoea ananatis LMG20103, the causative agent of Eucalyptus blight and dieback.</title>
        <authorList>
            <person name="De Maayer P."/>
            <person name="Chan W.Y."/>
            <person name="Venter S.N."/>
            <person name="Toth I.K."/>
            <person name="Birch P.R."/>
            <person name="Joubert F."/>
            <person name="Coutinho T.A."/>
        </authorList>
    </citation>
    <scope>NUCLEOTIDE SEQUENCE [LARGE SCALE GENOMIC DNA]</scope>
    <source>
        <strain>LMG 20103</strain>
    </source>
</reference>
<protein>
    <recommendedName>
        <fullName evidence="1">Regulator of ribonuclease activity B</fullName>
    </recommendedName>
</protein>
<accession>D4GIR2</accession>
<keyword id="KW-0963">Cytoplasm</keyword>
<keyword id="KW-1185">Reference proteome</keyword>
<organism>
    <name type="scientific">Pantoea ananatis (strain LMG 20103)</name>
    <dbReference type="NCBI Taxonomy" id="706191"/>
    <lineage>
        <taxon>Bacteria</taxon>
        <taxon>Pseudomonadati</taxon>
        <taxon>Pseudomonadota</taxon>
        <taxon>Gammaproteobacteria</taxon>
        <taxon>Enterobacterales</taxon>
        <taxon>Erwiniaceae</taxon>
        <taxon>Pantoea</taxon>
    </lineage>
</organism>
<gene>
    <name evidence="1" type="primary">rraB</name>
    <name type="ordered locus">PANA_0490</name>
</gene>
<comment type="function">
    <text evidence="1">Globally modulates RNA abundance by binding to RNase E (Rne) and regulating its endonucleolytic activity. Can modulate Rne action in a substrate-dependent manner by altering the composition of the degradosome.</text>
</comment>
<comment type="subunit">
    <text evidence="1">Interacts with the C-terminal region of Rne.</text>
</comment>
<comment type="subcellular location">
    <subcellularLocation>
        <location evidence="1">Cytoplasm</location>
    </subcellularLocation>
</comment>
<comment type="similarity">
    <text evidence="1">Belongs to the RraB family.</text>
</comment>
<name>RRAB_PANAM</name>